<sequence length="433" mass="50902">MTTLDKNIVQINGPVNIARLEGQINGFNKVVYLFMDHHIPVQFQTECDNIFARDVQTFLAESFRNIGETGLMYDFFIEERPESIINEDSKTTNSRKEGYIWEVVKMFNKVFKFDPKENKVMSSNVFENVRFHYADIREYIYLDTLNLYNDIRNLLQEMQENNFMDPYILEHIVNILSNIFEKNKSVIDIMNSFEKNSEANSVNKITPLKYPKVYEDTNIPLTNKEPNKDASTLEKQKNLRTDYLKYFLNKLYNSYKDKNIKSKLLLELRQLKNNITNLQNKITKTMDNVKKIIEEIEQSKNKVTLTDYSFFMGISPLETRIYIANLINQISILATANIIENIGFMDIFFLRRFLDKDYITNAIIYSGSLHSANYMKILVKEFDFKVTHISKSQYPIDKLNDSIKERNNLAEIVYLAGSYTQCSDITNFPKNFQ</sequence>
<organism>
    <name type="scientific">Acanthamoeba polyphaga mimivirus</name>
    <name type="common">APMV</name>
    <dbReference type="NCBI Taxonomy" id="212035"/>
    <lineage>
        <taxon>Viruses</taxon>
        <taxon>Varidnaviria</taxon>
        <taxon>Bamfordvirae</taxon>
        <taxon>Nucleocytoviricota</taxon>
        <taxon>Megaviricetes</taxon>
        <taxon>Imitervirales</taxon>
        <taxon>Mimiviridae</taxon>
        <taxon>Megamimivirinae</taxon>
        <taxon>Mimivirus</taxon>
        <taxon>Mimivirus bradfordmassiliense</taxon>
    </lineage>
</organism>
<proteinExistence type="evidence at protein level"/>
<keyword id="KW-0175">Coiled coil</keyword>
<keyword id="KW-1185">Reference proteome</keyword>
<keyword id="KW-0946">Virion</keyword>
<reference key="1">
    <citation type="journal article" date="2004" name="Science">
        <title>The 1.2-megabase genome sequence of Mimivirus.</title>
        <authorList>
            <person name="Raoult D."/>
            <person name="Audic S."/>
            <person name="Robert C."/>
            <person name="Abergel C."/>
            <person name="Renesto P."/>
            <person name="Ogata H."/>
            <person name="La Scola B."/>
            <person name="Susan M."/>
            <person name="Claverie J.-M."/>
        </authorList>
    </citation>
    <scope>NUCLEOTIDE SEQUENCE [LARGE SCALE GENOMIC DNA]</scope>
    <source>
        <strain>Rowbotham-Bradford</strain>
    </source>
</reference>
<reference key="2">
    <citation type="journal article" date="2006" name="J. Virol.">
        <title>Mimivirus giant particles incorporate a large fraction of anonymous and unique gene products.</title>
        <authorList>
            <person name="Renesto P."/>
            <person name="Abergel C."/>
            <person name="Decloquement P."/>
            <person name="Moinier D."/>
            <person name="Azza S."/>
            <person name="Ogata H."/>
            <person name="Fourquet P."/>
            <person name="Gorvel J.-P."/>
            <person name="Claverie J.-M."/>
            <person name="Raoult D."/>
        </authorList>
    </citation>
    <scope>IDENTIFICATION BY MASS SPECTROMETRY [LARGE SCALE ANALYSIS]</scope>
    <scope>SUBCELLULAR LOCATION</scope>
</reference>
<evidence type="ECO:0000255" key="1"/>
<evidence type="ECO:0000269" key="2">
    <source>
    </source>
</evidence>
<evidence type="ECO:0000305" key="3"/>
<feature type="chain" id="PRO_0000071224" description="Uncharacterized protein R161">
    <location>
        <begin position="1"/>
        <end position="433"/>
    </location>
</feature>
<feature type="coiled-coil region" evidence="1">
    <location>
        <begin position="258"/>
        <end position="304"/>
    </location>
</feature>
<comment type="subcellular location">
    <subcellularLocation>
        <location evidence="2">Virion</location>
    </subcellularLocation>
</comment>
<comment type="similarity">
    <text evidence="3">Belongs to the mimivirus R160 family.</text>
</comment>
<protein>
    <recommendedName>
        <fullName>Uncharacterized protein R161</fullName>
    </recommendedName>
</protein>
<dbReference type="EMBL" id="AY653733">
    <property type="protein sequence ID" value="AAQ09590.2"/>
    <property type="molecule type" value="Genomic_DNA"/>
</dbReference>
<dbReference type="SMR" id="Q7T6X0"/>
<dbReference type="KEGG" id="vg:9924761"/>
<dbReference type="Proteomes" id="UP000001134">
    <property type="component" value="Genome"/>
</dbReference>
<dbReference type="GO" id="GO:0044423">
    <property type="term" value="C:virion component"/>
    <property type="evidence" value="ECO:0007669"/>
    <property type="project" value="UniProtKB-KW"/>
</dbReference>
<dbReference type="InterPro" id="IPR043885">
    <property type="entry name" value="DUF5847"/>
</dbReference>
<dbReference type="Pfam" id="PF19165">
    <property type="entry name" value="DUF5847"/>
    <property type="match status" value="1"/>
</dbReference>
<organismHost>
    <name type="scientific">Acanthamoeba polyphaga</name>
    <name type="common">Amoeba</name>
    <dbReference type="NCBI Taxonomy" id="5757"/>
</organismHost>
<gene>
    <name type="ordered locus">MIMI_R161</name>
</gene>
<accession>Q7T6X0</accession>
<name>YR161_MIMIV</name>